<sequence>MTATATEGAKPPFVSRSVLVTGGNRGIGLAIAQRLAADGHKVAVTHRGSGAPKGLFGVECDVTDSDAVDRAFTAVEEHQGPVEVLVSNAGLSADAFLMRMTEEKFEKVINANLTGAFRVAQRASRSMQRNKFGRMIFIGSVSGSWGIGNQANYAASKAGVIGMARSIARELSKANVTANVVAPGYIDTDMTRALDERIQQGALQFIPAKRVGTPAEVAGVVSFLASEDASYISGAVIPVDGGMGMGH</sequence>
<feature type="initiator methionine" description="Removed" evidence="1">
    <location>
        <position position="1"/>
    </location>
</feature>
<feature type="chain" id="PRO_0000428307" description="3-oxoacyl-[acyl-carrier-protein] reductase MabA">
    <location>
        <begin position="2"/>
        <end position="247"/>
    </location>
</feature>
<feature type="active site" description="Proton acceptor" evidence="4">
    <location>
        <position position="153"/>
    </location>
</feature>
<feature type="binding site" evidence="3">
    <location>
        <begin position="25"/>
        <end position="27"/>
    </location>
    <ligand>
        <name>NADP(+)</name>
        <dbReference type="ChEBI" id="CHEBI:58349"/>
    </ligand>
</feature>
<feature type="binding site" evidence="3">
    <location>
        <position position="47"/>
    </location>
    <ligand>
        <name>NADP(+)</name>
        <dbReference type="ChEBI" id="CHEBI:58349"/>
    </ligand>
</feature>
<feature type="binding site" evidence="3">
    <location>
        <begin position="61"/>
        <end position="62"/>
    </location>
    <ligand>
        <name>NADP(+)</name>
        <dbReference type="ChEBI" id="CHEBI:58349"/>
    </ligand>
</feature>
<feature type="binding site" evidence="3">
    <location>
        <position position="90"/>
    </location>
    <ligand>
        <name>NADP(+)</name>
        <dbReference type="ChEBI" id="CHEBI:58349"/>
    </ligand>
</feature>
<feature type="binding site" evidence="2">
    <location>
        <position position="153"/>
    </location>
    <ligand>
        <name>NADP(+)</name>
        <dbReference type="ChEBI" id="CHEBI:58349"/>
    </ligand>
</feature>
<feature type="binding site" evidence="2">
    <location>
        <position position="157"/>
    </location>
    <ligand>
        <name>NADP(+)</name>
        <dbReference type="ChEBI" id="CHEBI:58349"/>
    </ligand>
</feature>
<feature type="binding site" evidence="2">
    <location>
        <position position="186"/>
    </location>
    <ligand>
        <name>NADP(+)</name>
        <dbReference type="ChEBI" id="CHEBI:58349"/>
    </ligand>
</feature>
<feature type="binding site" evidence="2">
    <location>
        <position position="197"/>
    </location>
    <ligand>
        <name>NADP(+)</name>
        <dbReference type="ChEBI" id="CHEBI:58349"/>
    </ligand>
</feature>
<feature type="site" description="Important for activity" evidence="3">
    <location>
        <position position="140"/>
    </location>
</feature>
<evidence type="ECO:0000250" key="1"/>
<evidence type="ECO:0000250" key="2">
    <source>
        <dbReference type="UniProtKB" id="P71534"/>
    </source>
</evidence>
<evidence type="ECO:0000250" key="3">
    <source>
        <dbReference type="UniProtKB" id="P9WGT3"/>
    </source>
</evidence>
<evidence type="ECO:0000255" key="4">
    <source>
        <dbReference type="PROSITE-ProRule" id="PRU10001"/>
    </source>
</evidence>
<evidence type="ECO:0000305" key="5"/>
<keyword id="KW-0134">Cell wall</keyword>
<keyword id="KW-0275">Fatty acid biosynthesis</keyword>
<keyword id="KW-0276">Fatty acid metabolism</keyword>
<keyword id="KW-0444">Lipid biosynthesis</keyword>
<keyword id="KW-0443">Lipid metabolism</keyword>
<keyword id="KW-0521">NADP</keyword>
<keyword id="KW-0560">Oxidoreductase</keyword>
<keyword id="KW-1185">Reference proteome</keyword>
<keyword id="KW-0964">Secreted</keyword>
<name>MABA_MYCTO</name>
<dbReference type="EC" id="1.1.1.100" evidence="3"/>
<dbReference type="EMBL" id="AE000516">
    <property type="protein sequence ID" value="AAK45795.1"/>
    <property type="molecule type" value="Genomic_DNA"/>
</dbReference>
<dbReference type="PIR" id="F70710">
    <property type="entry name" value="F70710"/>
</dbReference>
<dbReference type="RefSeq" id="WP_003898892.1">
    <property type="nucleotide sequence ID" value="NZ_KK341227.1"/>
</dbReference>
<dbReference type="SMR" id="P9WGT2"/>
<dbReference type="GeneID" id="45425462"/>
<dbReference type="KEGG" id="mtc:MT1530"/>
<dbReference type="PATRIC" id="fig|83331.31.peg.1645"/>
<dbReference type="HOGENOM" id="CLU_010194_1_3_11"/>
<dbReference type="BioCyc" id="MetaCyc:G185E-5667-MONOMER"/>
<dbReference type="UniPathway" id="UPA00915"/>
<dbReference type="Proteomes" id="UP000001020">
    <property type="component" value="Chromosome"/>
</dbReference>
<dbReference type="GO" id="GO:0005576">
    <property type="term" value="C:extracellular region"/>
    <property type="evidence" value="ECO:0007669"/>
    <property type="project" value="UniProtKB-KW"/>
</dbReference>
<dbReference type="GO" id="GO:0004316">
    <property type="term" value="F:3-oxoacyl-[acyl-carrier-protein] reductase (NADPH) activity"/>
    <property type="evidence" value="ECO:0007669"/>
    <property type="project" value="UniProtKB-EC"/>
</dbReference>
<dbReference type="GO" id="GO:0006633">
    <property type="term" value="P:fatty acid biosynthetic process"/>
    <property type="evidence" value="ECO:0007669"/>
    <property type="project" value="UniProtKB-KW"/>
</dbReference>
<dbReference type="CDD" id="cd05333">
    <property type="entry name" value="BKR_SDR_c"/>
    <property type="match status" value="1"/>
</dbReference>
<dbReference type="FunFam" id="3.40.50.720:FF:000460">
    <property type="entry name" value="3-oxoacyl-[acyl-carrier-protein] reductase FabG1"/>
    <property type="match status" value="1"/>
</dbReference>
<dbReference type="Gene3D" id="3.40.50.720">
    <property type="entry name" value="NAD(P)-binding Rossmann-like Domain"/>
    <property type="match status" value="1"/>
</dbReference>
<dbReference type="InterPro" id="IPR053419">
    <property type="entry name" value="FAS-II_3-oxoacyl-ACP_reductase"/>
</dbReference>
<dbReference type="InterPro" id="IPR036291">
    <property type="entry name" value="NAD(P)-bd_dom_sf"/>
</dbReference>
<dbReference type="InterPro" id="IPR020904">
    <property type="entry name" value="Sc_DH/Rdtase_CS"/>
</dbReference>
<dbReference type="InterPro" id="IPR050259">
    <property type="entry name" value="SDR"/>
</dbReference>
<dbReference type="InterPro" id="IPR002347">
    <property type="entry name" value="SDR_fam"/>
</dbReference>
<dbReference type="NCBIfam" id="NF040605">
    <property type="entry name" value="mycolic_FabG1"/>
    <property type="match status" value="1"/>
</dbReference>
<dbReference type="NCBIfam" id="NF009466">
    <property type="entry name" value="PRK12826.1-2"/>
    <property type="match status" value="1"/>
</dbReference>
<dbReference type="PANTHER" id="PTHR42879">
    <property type="entry name" value="3-OXOACYL-(ACYL-CARRIER-PROTEIN) REDUCTASE"/>
    <property type="match status" value="1"/>
</dbReference>
<dbReference type="PANTHER" id="PTHR42879:SF2">
    <property type="entry name" value="3-OXOACYL-[ACYL-CARRIER-PROTEIN] REDUCTASE FABG"/>
    <property type="match status" value="1"/>
</dbReference>
<dbReference type="Pfam" id="PF13561">
    <property type="entry name" value="adh_short_C2"/>
    <property type="match status" value="1"/>
</dbReference>
<dbReference type="PRINTS" id="PR00081">
    <property type="entry name" value="GDHRDH"/>
</dbReference>
<dbReference type="PRINTS" id="PR00080">
    <property type="entry name" value="SDRFAMILY"/>
</dbReference>
<dbReference type="SMART" id="SM00822">
    <property type="entry name" value="PKS_KR"/>
    <property type="match status" value="1"/>
</dbReference>
<dbReference type="SUPFAM" id="SSF51735">
    <property type="entry name" value="NAD(P)-binding Rossmann-fold domains"/>
    <property type="match status" value="1"/>
</dbReference>
<dbReference type="PROSITE" id="PS00061">
    <property type="entry name" value="ADH_SHORT"/>
    <property type="match status" value="1"/>
</dbReference>
<organism>
    <name type="scientific">Mycobacterium tuberculosis (strain CDC 1551 / Oshkosh)</name>
    <dbReference type="NCBI Taxonomy" id="83331"/>
    <lineage>
        <taxon>Bacteria</taxon>
        <taxon>Bacillati</taxon>
        <taxon>Actinomycetota</taxon>
        <taxon>Actinomycetes</taxon>
        <taxon>Mycobacteriales</taxon>
        <taxon>Mycobacteriaceae</taxon>
        <taxon>Mycobacterium</taxon>
        <taxon>Mycobacterium tuberculosis complex</taxon>
    </lineage>
</organism>
<gene>
    <name evidence="3" type="primary">mabA</name>
    <name type="synonym">fabG1</name>
    <name type="ordered locus">MT1530</name>
</gene>
<accession>P9WGT2</accession>
<accession>L0T9R6</accession>
<accession>P0A5Y4</accession>
<accession>P71764</accession>
<accession>Q48930</accession>
<proteinExistence type="inferred from homology"/>
<comment type="function">
    <text evidence="3">Part of the mycobacterial fatty acid elongation system FAS-II, which is involved in mycolic acid biosynthesis. Catalyzes the NADPH-dependent reduction of beta-ketoacyl derivatives, the second step of the FAS-II elongation cycle.</text>
</comment>
<comment type="catalytic activity">
    <reaction evidence="3">
        <text>a (3R)-hydroxyacyl-[ACP] + NADP(+) = a 3-oxoacyl-[ACP] + NADPH + H(+)</text>
        <dbReference type="Rhea" id="RHEA:17397"/>
        <dbReference type="Rhea" id="RHEA-COMP:9916"/>
        <dbReference type="Rhea" id="RHEA-COMP:9945"/>
        <dbReference type="ChEBI" id="CHEBI:15378"/>
        <dbReference type="ChEBI" id="CHEBI:57783"/>
        <dbReference type="ChEBI" id="CHEBI:58349"/>
        <dbReference type="ChEBI" id="CHEBI:78776"/>
        <dbReference type="ChEBI" id="CHEBI:78827"/>
        <dbReference type="EC" id="1.1.1.100"/>
    </reaction>
    <physiologicalReaction direction="right-to-left" evidence="3">
        <dbReference type="Rhea" id="RHEA:17399"/>
    </physiologicalReaction>
</comment>
<comment type="pathway">
    <text evidence="3">Lipid metabolism; mycolic acid biosynthesis.</text>
</comment>
<comment type="subunit">
    <text evidence="3">Homotetramer.</text>
</comment>
<comment type="subcellular location">
    <subcellularLocation>
        <location evidence="3">Secreted</location>
        <location evidence="3">Cell wall</location>
    </subcellularLocation>
</comment>
<comment type="similarity">
    <text evidence="5">Belongs to the short-chain dehydrogenases/reductases (SDR) family.</text>
</comment>
<protein>
    <recommendedName>
        <fullName evidence="3">3-oxoacyl-[acyl-carrier-protein] reductase MabA</fullName>
        <ecNumber evidence="3">1.1.1.100</ecNumber>
    </recommendedName>
    <alternativeName>
        <fullName evidence="3">3-ketoacyl-acyl carrier protein reductase</fullName>
    </alternativeName>
    <alternativeName>
        <fullName evidence="3">Beta-ketoacyl-ACP reductase</fullName>
    </alternativeName>
    <alternativeName>
        <fullName evidence="3">Beta-ketoacyl-acyl carrier protein reductase</fullName>
    </alternativeName>
</protein>
<reference key="1">
    <citation type="journal article" date="2002" name="J. Bacteriol.">
        <title>Whole-genome comparison of Mycobacterium tuberculosis clinical and laboratory strains.</title>
        <authorList>
            <person name="Fleischmann R.D."/>
            <person name="Alland D."/>
            <person name="Eisen J.A."/>
            <person name="Carpenter L."/>
            <person name="White O."/>
            <person name="Peterson J.D."/>
            <person name="DeBoy R.T."/>
            <person name="Dodson R.J."/>
            <person name="Gwinn M.L."/>
            <person name="Haft D.H."/>
            <person name="Hickey E.K."/>
            <person name="Kolonay J.F."/>
            <person name="Nelson W.C."/>
            <person name="Umayam L.A."/>
            <person name="Ermolaeva M.D."/>
            <person name="Salzberg S.L."/>
            <person name="Delcher A."/>
            <person name="Utterback T.R."/>
            <person name="Weidman J.F."/>
            <person name="Khouri H.M."/>
            <person name="Gill J."/>
            <person name="Mikula A."/>
            <person name="Bishai W."/>
            <person name="Jacobs W.R. Jr."/>
            <person name="Venter J.C."/>
            <person name="Fraser C.M."/>
        </authorList>
    </citation>
    <scope>NUCLEOTIDE SEQUENCE [LARGE SCALE GENOMIC DNA]</scope>
    <source>
        <strain>CDC 1551 / Oshkosh</strain>
    </source>
</reference>